<reference key="1">
    <citation type="journal article" date="2001" name="Science">
        <title>Comparative genomics of Listeria species.</title>
        <authorList>
            <person name="Glaser P."/>
            <person name="Frangeul L."/>
            <person name="Buchrieser C."/>
            <person name="Rusniok C."/>
            <person name="Amend A."/>
            <person name="Baquero F."/>
            <person name="Berche P."/>
            <person name="Bloecker H."/>
            <person name="Brandt P."/>
            <person name="Chakraborty T."/>
            <person name="Charbit A."/>
            <person name="Chetouani F."/>
            <person name="Couve E."/>
            <person name="de Daruvar A."/>
            <person name="Dehoux P."/>
            <person name="Domann E."/>
            <person name="Dominguez-Bernal G."/>
            <person name="Duchaud E."/>
            <person name="Durant L."/>
            <person name="Dussurget O."/>
            <person name="Entian K.-D."/>
            <person name="Fsihi H."/>
            <person name="Garcia-del Portillo F."/>
            <person name="Garrido P."/>
            <person name="Gautier L."/>
            <person name="Goebel W."/>
            <person name="Gomez-Lopez N."/>
            <person name="Hain T."/>
            <person name="Hauf J."/>
            <person name="Jackson D."/>
            <person name="Jones L.-M."/>
            <person name="Kaerst U."/>
            <person name="Kreft J."/>
            <person name="Kuhn M."/>
            <person name="Kunst F."/>
            <person name="Kurapkat G."/>
            <person name="Madueno E."/>
            <person name="Maitournam A."/>
            <person name="Mata Vicente J."/>
            <person name="Ng E."/>
            <person name="Nedjari H."/>
            <person name="Nordsiek G."/>
            <person name="Novella S."/>
            <person name="de Pablos B."/>
            <person name="Perez-Diaz J.-C."/>
            <person name="Purcell R."/>
            <person name="Remmel B."/>
            <person name="Rose M."/>
            <person name="Schlueter T."/>
            <person name="Simoes N."/>
            <person name="Tierrez A."/>
            <person name="Vazquez-Boland J.-A."/>
            <person name="Voss H."/>
            <person name="Wehland J."/>
            <person name="Cossart P."/>
        </authorList>
    </citation>
    <scope>NUCLEOTIDE SEQUENCE [LARGE SCALE GENOMIC DNA]</scope>
    <source>
        <strain>ATCC BAA-679 / EGD-e</strain>
    </source>
</reference>
<evidence type="ECO:0000255" key="1">
    <source>
        <dbReference type="HAMAP-Rule" id="MF_00210"/>
    </source>
</evidence>
<comment type="function">
    <text evidence="1">Catalyzes the transfer of the enolpyruvyl moiety of phosphoenolpyruvate (PEP) to the 5-hydroxyl of shikimate-3-phosphate (S3P) to produce enolpyruvyl shikimate-3-phosphate and inorganic phosphate.</text>
</comment>
<comment type="catalytic activity">
    <reaction evidence="1">
        <text>3-phosphoshikimate + phosphoenolpyruvate = 5-O-(1-carboxyvinyl)-3-phosphoshikimate + phosphate</text>
        <dbReference type="Rhea" id="RHEA:21256"/>
        <dbReference type="ChEBI" id="CHEBI:43474"/>
        <dbReference type="ChEBI" id="CHEBI:57701"/>
        <dbReference type="ChEBI" id="CHEBI:58702"/>
        <dbReference type="ChEBI" id="CHEBI:145989"/>
        <dbReference type="EC" id="2.5.1.19"/>
    </reaction>
    <physiologicalReaction direction="left-to-right" evidence="1">
        <dbReference type="Rhea" id="RHEA:21257"/>
    </physiologicalReaction>
</comment>
<comment type="pathway">
    <text evidence="1">Metabolic intermediate biosynthesis; chorismate biosynthesis; chorismate from D-erythrose 4-phosphate and phosphoenolpyruvate: step 6/7.</text>
</comment>
<comment type="subunit">
    <text evidence="1">Monomer.</text>
</comment>
<comment type="subcellular location">
    <subcellularLocation>
        <location evidence="1">Cytoplasm</location>
    </subcellularLocation>
</comment>
<comment type="similarity">
    <text evidence="1">Belongs to the EPSP synthase family.</text>
</comment>
<dbReference type="EC" id="2.5.1.19" evidence="1"/>
<dbReference type="EMBL" id="AL591981">
    <property type="protein sequence ID" value="CAD00001.1"/>
    <property type="molecule type" value="Genomic_DNA"/>
</dbReference>
<dbReference type="PIR" id="AC1315">
    <property type="entry name" value="AC1315"/>
</dbReference>
<dbReference type="RefSeq" id="NP_465447.1">
    <property type="nucleotide sequence ID" value="NC_003210.1"/>
</dbReference>
<dbReference type="RefSeq" id="WP_003732042.1">
    <property type="nucleotide sequence ID" value="NZ_CP149495.1"/>
</dbReference>
<dbReference type="SMR" id="Q8Y5Y0"/>
<dbReference type="STRING" id="169963.gene:17594608"/>
<dbReference type="PaxDb" id="169963-lmo1923"/>
<dbReference type="EnsemblBacteria" id="CAD00001">
    <property type="protein sequence ID" value="CAD00001"/>
    <property type="gene ID" value="CAD00001"/>
</dbReference>
<dbReference type="GeneID" id="985759"/>
<dbReference type="KEGG" id="lmo:lmo1923"/>
<dbReference type="PATRIC" id="fig|169963.11.peg.1969"/>
<dbReference type="eggNOG" id="COG0128">
    <property type="taxonomic scope" value="Bacteria"/>
</dbReference>
<dbReference type="HOGENOM" id="CLU_024321_0_1_9"/>
<dbReference type="OrthoDB" id="9809920at2"/>
<dbReference type="PhylomeDB" id="Q8Y5Y0"/>
<dbReference type="BioCyc" id="LMON169963:LMO1923-MONOMER"/>
<dbReference type="UniPathway" id="UPA00053">
    <property type="reaction ID" value="UER00089"/>
</dbReference>
<dbReference type="Proteomes" id="UP000000817">
    <property type="component" value="Chromosome"/>
</dbReference>
<dbReference type="GO" id="GO:0005737">
    <property type="term" value="C:cytoplasm"/>
    <property type="evidence" value="ECO:0007669"/>
    <property type="project" value="UniProtKB-SubCell"/>
</dbReference>
<dbReference type="GO" id="GO:0003866">
    <property type="term" value="F:3-phosphoshikimate 1-carboxyvinyltransferase activity"/>
    <property type="evidence" value="ECO:0000318"/>
    <property type="project" value="GO_Central"/>
</dbReference>
<dbReference type="GO" id="GO:0008652">
    <property type="term" value="P:amino acid biosynthetic process"/>
    <property type="evidence" value="ECO:0007669"/>
    <property type="project" value="UniProtKB-KW"/>
</dbReference>
<dbReference type="GO" id="GO:0009073">
    <property type="term" value="P:aromatic amino acid family biosynthetic process"/>
    <property type="evidence" value="ECO:0007669"/>
    <property type="project" value="UniProtKB-KW"/>
</dbReference>
<dbReference type="GO" id="GO:0009423">
    <property type="term" value="P:chorismate biosynthetic process"/>
    <property type="evidence" value="ECO:0000318"/>
    <property type="project" value="GO_Central"/>
</dbReference>
<dbReference type="CDD" id="cd01556">
    <property type="entry name" value="EPSP_synthase"/>
    <property type="match status" value="1"/>
</dbReference>
<dbReference type="FunFam" id="3.65.10.10:FF:000005">
    <property type="entry name" value="3-phosphoshikimate 1-carboxyvinyltransferase"/>
    <property type="match status" value="1"/>
</dbReference>
<dbReference type="FunFam" id="3.65.10.10:FF:000006">
    <property type="entry name" value="3-phosphoshikimate 1-carboxyvinyltransferase"/>
    <property type="match status" value="1"/>
</dbReference>
<dbReference type="Gene3D" id="3.65.10.10">
    <property type="entry name" value="Enolpyruvate transferase domain"/>
    <property type="match status" value="2"/>
</dbReference>
<dbReference type="HAMAP" id="MF_00210">
    <property type="entry name" value="EPSP_synth"/>
    <property type="match status" value="1"/>
</dbReference>
<dbReference type="InterPro" id="IPR001986">
    <property type="entry name" value="Enolpyruvate_Tfrase_dom"/>
</dbReference>
<dbReference type="InterPro" id="IPR036968">
    <property type="entry name" value="Enolpyruvate_Tfrase_sf"/>
</dbReference>
<dbReference type="InterPro" id="IPR006264">
    <property type="entry name" value="EPSP_synthase"/>
</dbReference>
<dbReference type="InterPro" id="IPR023193">
    <property type="entry name" value="EPSP_synthase_CS"/>
</dbReference>
<dbReference type="InterPro" id="IPR013792">
    <property type="entry name" value="RNA3'P_cycl/enolpyr_Trfase_a/b"/>
</dbReference>
<dbReference type="NCBIfam" id="TIGR01356">
    <property type="entry name" value="aroA"/>
    <property type="match status" value="1"/>
</dbReference>
<dbReference type="PANTHER" id="PTHR21090">
    <property type="entry name" value="AROM/DEHYDROQUINATE SYNTHASE"/>
    <property type="match status" value="1"/>
</dbReference>
<dbReference type="PANTHER" id="PTHR21090:SF5">
    <property type="entry name" value="PENTAFUNCTIONAL AROM POLYPEPTIDE"/>
    <property type="match status" value="1"/>
</dbReference>
<dbReference type="Pfam" id="PF00275">
    <property type="entry name" value="EPSP_synthase"/>
    <property type="match status" value="1"/>
</dbReference>
<dbReference type="PIRSF" id="PIRSF000505">
    <property type="entry name" value="EPSPS"/>
    <property type="match status" value="1"/>
</dbReference>
<dbReference type="SUPFAM" id="SSF55205">
    <property type="entry name" value="EPT/RTPC-like"/>
    <property type="match status" value="1"/>
</dbReference>
<dbReference type="PROSITE" id="PS00104">
    <property type="entry name" value="EPSP_SYNTHASE_1"/>
    <property type="match status" value="1"/>
</dbReference>
<dbReference type="PROSITE" id="PS00885">
    <property type="entry name" value="EPSP_SYNTHASE_2"/>
    <property type="match status" value="1"/>
</dbReference>
<proteinExistence type="inferred from homology"/>
<name>AROA_LISMO</name>
<organism>
    <name type="scientific">Listeria monocytogenes serovar 1/2a (strain ATCC BAA-679 / EGD-e)</name>
    <dbReference type="NCBI Taxonomy" id="169963"/>
    <lineage>
        <taxon>Bacteria</taxon>
        <taxon>Bacillati</taxon>
        <taxon>Bacillota</taxon>
        <taxon>Bacilli</taxon>
        <taxon>Bacillales</taxon>
        <taxon>Listeriaceae</taxon>
        <taxon>Listeria</taxon>
    </lineage>
</organism>
<gene>
    <name evidence="1" type="primary">aroA</name>
    <name type="synonym">aroE</name>
    <name type="ordered locus">lmo1923</name>
</gene>
<protein>
    <recommendedName>
        <fullName evidence="1">3-phosphoshikimate 1-carboxyvinyltransferase</fullName>
        <ecNumber evidence="1">2.5.1.19</ecNumber>
    </recommendedName>
    <alternativeName>
        <fullName evidence="1">5-enolpyruvylshikimate-3-phosphate synthase</fullName>
        <shortName evidence="1">EPSP synthase</shortName>
        <shortName evidence="1">EPSPS</shortName>
    </alternativeName>
</protein>
<accession>Q8Y5Y0</accession>
<feature type="chain" id="PRO_0000088270" description="3-phosphoshikimate 1-carboxyvinyltransferase">
    <location>
        <begin position="1"/>
        <end position="428"/>
    </location>
</feature>
<feature type="active site" description="Proton acceptor" evidence="1">
    <location>
        <position position="314"/>
    </location>
</feature>
<feature type="binding site" evidence="1">
    <location>
        <position position="20"/>
    </location>
    <ligand>
        <name>3-phosphoshikimate</name>
        <dbReference type="ChEBI" id="CHEBI:145989"/>
    </ligand>
</feature>
<feature type="binding site" evidence="1">
    <location>
        <position position="20"/>
    </location>
    <ligand>
        <name>phosphoenolpyruvate</name>
        <dbReference type="ChEBI" id="CHEBI:58702"/>
    </ligand>
</feature>
<feature type="binding site" evidence="1">
    <location>
        <position position="21"/>
    </location>
    <ligand>
        <name>3-phosphoshikimate</name>
        <dbReference type="ChEBI" id="CHEBI:145989"/>
    </ligand>
</feature>
<feature type="binding site" evidence="1">
    <location>
        <position position="25"/>
    </location>
    <ligand>
        <name>3-phosphoshikimate</name>
        <dbReference type="ChEBI" id="CHEBI:145989"/>
    </ligand>
</feature>
<feature type="binding site" evidence="1">
    <location>
        <position position="92"/>
    </location>
    <ligand>
        <name>phosphoenolpyruvate</name>
        <dbReference type="ChEBI" id="CHEBI:58702"/>
    </ligand>
</feature>
<feature type="binding site" evidence="1">
    <location>
        <position position="120"/>
    </location>
    <ligand>
        <name>phosphoenolpyruvate</name>
        <dbReference type="ChEBI" id="CHEBI:58702"/>
    </ligand>
</feature>
<feature type="binding site" evidence="1">
    <location>
        <position position="166"/>
    </location>
    <ligand>
        <name>3-phosphoshikimate</name>
        <dbReference type="ChEBI" id="CHEBI:145989"/>
    </ligand>
</feature>
<feature type="binding site" evidence="1">
    <location>
        <position position="168"/>
    </location>
    <ligand>
        <name>3-phosphoshikimate</name>
        <dbReference type="ChEBI" id="CHEBI:145989"/>
    </ligand>
</feature>
<feature type="binding site" evidence="1">
    <location>
        <position position="168"/>
    </location>
    <ligand>
        <name>phosphoenolpyruvate</name>
        <dbReference type="ChEBI" id="CHEBI:58702"/>
    </ligand>
</feature>
<feature type="binding site" evidence="1">
    <location>
        <position position="314"/>
    </location>
    <ligand>
        <name>3-phosphoshikimate</name>
        <dbReference type="ChEBI" id="CHEBI:145989"/>
    </ligand>
</feature>
<feature type="binding site" evidence="1">
    <location>
        <position position="341"/>
    </location>
    <ligand>
        <name>3-phosphoshikimate</name>
        <dbReference type="ChEBI" id="CHEBI:145989"/>
    </ligand>
</feature>
<feature type="binding site" evidence="1">
    <location>
        <position position="345"/>
    </location>
    <ligand>
        <name>phosphoenolpyruvate</name>
        <dbReference type="ChEBI" id="CHEBI:58702"/>
    </ligand>
</feature>
<feature type="binding site" evidence="1">
    <location>
        <position position="387"/>
    </location>
    <ligand>
        <name>phosphoenolpyruvate</name>
        <dbReference type="ChEBI" id="CHEBI:58702"/>
    </ligand>
</feature>
<sequence>MKLITNKQGLVGAITVPGDKSMSHRSIMFGAIAEGKTVIRHFLRADDCLGTIKAFKALGVKIEETDEEIIVHGTGFDGLKQADGPLDIGNSGTTIRLMMGILAGRDFDTVILGDESIAKRPMNRVMLPLQQMGAKMHGKDGSEFAPITITGKQSLKRMEYHMPVASAQVKSAIIFAALQAEGETIIHEKEKTRDHTEHMIRQFGGEIEMDGLTIRVKGGQKFTGQEMTVPGDVSSAAFFIVAGLITPGSEIELTHVGLNPTRTGIFDVVKQMGGSLVVKDSSRSTGKLAGTVVVKTSKLKGTEIDGDIIPRLIDEIPVIALLATQAEGTTIIKDAAELKVKETNRIDAVATELNKMGADITPTEDGLIIHGKTPLHAANVTSYGDHRIGMMLQIAALLVEEGDVELERPEAVSVSYPTFFEDIRSLLK</sequence>
<keyword id="KW-0028">Amino-acid biosynthesis</keyword>
<keyword id="KW-0057">Aromatic amino acid biosynthesis</keyword>
<keyword id="KW-0963">Cytoplasm</keyword>
<keyword id="KW-1185">Reference proteome</keyword>
<keyword id="KW-0808">Transferase</keyword>